<organism>
    <name type="scientific">Bos taurus</name>
    <name type="common">Bovine</name>
    <dbReference type="NCBI Taxonomy" id="9913"/>
    <lineage>
        <taxon>Eukaryota</taxon>
        <taxon>Metazoa</taxon>
        <taxon>Chordata</taxon>
        <taxon>Craniata</taxon>
        <taxon>Vertebrata</taxon>
        <taxon>Euteleostomi</taxon>
        <taxon>Mammalia</taxon>
        <taxon>Eutheria</taxon>
        <taxon>Laurasiatheria</taxon>
        <taxon>Artiodactyla</taxon>
        <taxon>Ruminantia</taxon>
        <taxon>Pecora</taxon>
        <taxon>Bovidae</taxon>
        <taxon>Bovinae</taxon>
        <taxon>Bos</taxon>
    </lineage>
</organism>
<feature type="chain" id="PRO_0000328163" description="Tetratricopeptide repeat protein 4">
    <location>
        <begin position="1"/>
        <end position="388"/>
    </location>
</feature>
<feature type="repeat" description="TPR 1">
    <location>
        <begin position="79"/>
        <end position="112"/>
    </location>
</feature>
<feature type="repeat" description="TPR 2">
    <location>
        <begin position="117"/>
        <end position="150"/>
    </location>
</feature>
<feature type="repeat" description="TPR 3">
    <location>
        <begin position="151"/>
        <end position="184"/>
    </location>
</feature>
<feature type="site" description="Essential for interaction with HSPA8" evidence="1">
    <location>
        <position position="152"/>
    </location>
</feature>
<feature type="site" description="Essential for interaction with HSPA8" evidence="1">
    <location>
        <position position="156"/>
    </location>
</feature>
<feature type="modified residue" description="N-acetylmethionine" evidence="1">
    <location>
        <position position="1"/>
    </location>
</feature>
<feature type="modified residue" description="Phosphoserine" evidence="1">
    <location>
        <position position="51"/>
    </location>
</feature>
<feature type="modified residue" description="Phosphoserine" evidence="1">
    <location>
        <position position="244"/>
    </location>
</feature>
<feature type="sequence conflict" description="In Ref. 2; AAI40529." evidence="3" ref="2">
    <original>Y</original>
    <variation>H</variation>
    <location>
        <position position="255"/>
    </location>
</feature>
<feature type="sequence conflict" description="In Ref. 2; AAI40529." evidence="3" ref="2">
    <original>S</original>
    <variation>G</variation>
    <location>
        <position position="258"/>
    </location>
</feature>
<feature type="sequence conflict" description="In Ref. 2; AAI40529." evidence="3" ref="2">
    <original>Y</original>
    <variation>H</variation>
    <location>
        <position position="286"/>
    </location>
</feature>
<feature type="sequence conflict" description="In Ref. 2; AAI40529." evidence="3" ref="2">
    <original>E</original>
    <variation>D</variation>
    <location>
        <position position="318"/>
    </location>
</feature>
<protein>
    <recommendedName>
        <fullName>Tetratricopeptide repeat protein 4</fullName>
        <shortName>TPR repeat protein 4</shortName>
    </recommendedName>
</protein>
<gene>
    <name type="primary">TTC4</name>
</gene>
<keyword id="KW-0007">Acetylation</keyword>
<keyword id="KW-0051">Antiviral defense</keyword>
<keyword id="KW-0963">Cytoplasm</keyword>
<keyword id="KW-0391">Immunity</keyword>
<keyword id="KW-0399">Innate immunity</keyword>
<keyword id="KW-0539">Nucleus</keyword>
<keyword id="KW-0597">Phosphoprotein</keyword>
<keyword id="KW-1185">Reference proteome</keyword>
<keyword id="KW-0677">Repeat</keyword>
<keyword id="KW-0802">TPR repeat</keyword>
<reference key="1">
    <citation type="journal article" date="2005" name="BMC Genomics">
        <title>Characterization of 954 bovine full-CDS cDNA sequences.</title>
        <authorList>
            <person name="Harhay G.P."/>
            <person name="Sonstegard T.S."/>
            <person name="Keele J.W."/>
            <person name="Heaton M.P."/>
            <person name="Clawson M.L."/>
            <person name="Snelling W.M."/>
            <person name="Wiedmann R.T."/>
            <person name="Van Tassell C.P."/>
            <person name="Smith T.P.L."/>
        </authorList>
    </citation>
    <scope>NUCLEOTIDE SEQUENCE [LARGE SCALE MRNA]</scope>
</reference>
<reference key="2">
    <citation type="submission" date="2007-04" db="EMBL/GenBank/DDBJ databases">
        <authorList>
            <consortium name="NIH - Mammalian Gene Collection (MGC) project"/>
        </authorList>
    </citation>
    <scope>NUCLEOTIDE SEQUENCE [LARGE SCALE MRNA]</scope>
    <source>
        <strain>Hereford</strain>
        <tissue>Hippocampus</tissue>
    </source>
</reference>
<evidence type="ECO:0000250" key="1">
    <source>
        <dbReference type="UniProtKB" id="O95801"/>
    </source>
</evidence>
<evidence type="ECO:0000250" key="2">
    <source>
        <dbReference type="UniProtKB" id="Q8R3H9"/>
    </source>
</evidence>
<evidence type="ECO:0000305" key="3"/>
<comment type="function">
    <text evidence="1">May act as a co-chaperone for HSP90AB1 (By similarity).</text>
</comment>
<comment type="subunit">
    <text evidence="1">Interacts (via TPR repeats) with HSP90AB1 (By similarity). Interacts with HSPA8, CDC6, TBK1 and MSL1 (By similarity).</text>
</comment>
<comment type="subcellular location">
    <subcellularLocation>
        <location evidence="1">Nucleus</location>
    </subcellularLocation>
    <subcellularLocation>
        <location evidence="1">Nucleus</location>
        <location evidence="1">Nucleoplasm</location>
    </subcellularLocation>
    <subcellularLocation>
        <location evidence="1">Cytoplasm</location>
    </subcellularLocation>
    <text evidence="2">Predominantly nuclear in the G1 and S phases of cell cycle and is evenly distributed between the nucleus and cytoplasm in the G2 phase. MSL1 can promote its nuclear localization (By similarity).</text>
</comment>
<comment type="similarity">
    <text evidence="3">Belongs to the TTC4 family.</text>
</comment>
<comment type="sequence caution" evidence="3">
    <conflict type="erroneous initiation">
        <sequence resource="EMBL-CDS" id="AAX08775"/>
    </conflict>
</comment>
<accession>Q5EA11</accession>
<accession>A5D7E7</accession>
<name>TTC4_BOVIN</name>
<proteinExistence type="evidence at transcript level"/>
<dbReference type="EMBL" id="BT020758">
    <property type="protein sequence ID" value="AAX08775.1"/>
    <property type="status" value="ALT_INIT"/>
    <property type="molecule type" value="mRNA"/>
</dbReference>
<dbReference type="EMBL" id="BC140528">
    <property type="protein sequence ID" value="AAI40529.1"/>
    <property type="molecule type" value="mRNA"/>
</dbReference>
<dbReference type="RefSeq" id="NP_001015554.1">
    <property type="nucleotide sequence ID" value="NM_001015554.1"/>
</dbReference>
<dbReference type="SMR" id="Q5EA11"/>
<dbReference type="FunCoup" id="Q5EA11">
    <property type="interactions" value="4965"/>
</dbReference>
<dbReference type="STRING" id="9913.ENSBTAP00000059350"/>
<dbReference type="PaxDb" id="9913-ENSBTAP00000021186"/>
<dbReference type="GeneID" id="509047"/>
<dbReference type="KEGG" id="bta:509047"/>
<dbReference type="CTD" id="7268"/>
<dbReference type="eggNOG" id="KOG0551">
    <property type="taxonomic scope" value="Eukaryota"/>
</dbReference>
<dbReference type="InParanoid" id="Q5EA11"/>
<dbReference type="OrthoDB" id="420195at2759"/>
<dbReference type="Proteomes" id="UP000009136">
    <property type="component" value="Unplaced"/>
</dbReference>
<dbReference type="GO" id="GO:0005737">
    <property type="term" value="C:cytoplasm"/>
    <property type="evidence" value="ECO:0000250"/>
    <property type="project" value="UniProtKB"/>
</dbReference>
<dbReference type="GO" id="GO:0005654">
    <property type="term" value="C:nucleoplasm"/>
    <property type="evidence" value="ECO:0007669"/>
    <property type="project" value="UniProtKB-SubCell"/>
</dbReference>
<dbReference type="GO" id="GO:0005634">
    <property type="term" value="C:nucleus"/>
    <property type="evidence" value="ECO:0000250"/>
    <property type="project" value="UniProtKB"/>
</dbReference>
<dbReference type="GO" id="GO:0030544">
    <property type="term" value="F:Hsp70 protein binding"/>
    <property type="evidence" value="ECO:0000318"/>
    <property type="project" value="GO_Central"/>
</dbReference>
<dbReference type="GO" id="GO:0051879">
    <property type="term" value="F:Hsp90 protein binding"/>
    <property type="evidence" value="ECO:0000318"/>
    <property type="project" value="GO_Central"/>
</dbReference>
<dbReference type="GO" id="GO:0051607">
    <property type="term" value="P:defense response to virus"/>
    <property type="evidence" value="ECO:0000250"/>
    <property type="project" value="UniProtKB"/>
</dbReference>
<dbReference type="GO" id="GO:0045087">
    <property type="term" value="P:innate immune response"/>
    <property type="evidence" value="ECO:0000250"/>
    <property type="project" value="UniProtKB"/>
</dbReference>
<dbReference type="GO" id="GO:0006457">
    <property type="term" value="P:protein folding"/>
    <property type="evidence" value="ECO:0000318"/>
    <property type="project" value="GO_Central"/>
</dbReference>
<dbReference type="CDD" id="cd21380">
    <property type="entry name" value="CTWD_Cns1"/>
    <property type="match status" value="1"/>
</dbReference>
<dbReference type="Gene3D" id="1.25.40.10">
    <property type="entry name" value="Tetratricopeptide repeat domain"/>
    <property type="match status" value="1"/>
</dbReference>
<dbReference type="InterPro" id="IPR044059">
    <property type="entry name" value="Csn1/TTC4_wheel"/>
</dbReference>
<dbReference type="InterPro" id="IPR011990">
    <property type="entry name" value="TPR-like_helical_dom_sf"/>
</dbReference>
<dbReference type="InterPro" id="IPR019734">
    <property type="entry name" value="TPR_rpt"/>
</dbReference>
<dbReference type="PANTHER" id="PTHR46035">
    <property type="entry name" value="TETRATRICOPEPTIDE REPEAT PROTEIN 4"/>
    <property type="match status" value="1"/>
</dbReference>
<dbReference type="PANTHER" id="PTHR46035:SF1">
    <property type="entry name" value="TETRATRICOPEPTIDE REPEAT PROTEIN 4"/>
    <property type="match status" value="1"/>
</dbReference>
<dbReference type="Pfam" id="PF18972">
    <property type="entry name" value="Wheel"/>
    <property type="match status" value="1"/>
</dbReference>
<dbReference type="SMART" id="SM00028">
    <property type="entry name" value="TPR"/>
    <property type="match status" value="3"/>
</dbReference>
<dbReference type="SUPFAM" id="SSF48452">
    <property type="entry name" value="TPR-like"/>
    <property type="match status" value="1"/>
</dbReference>
<dbReference type="PROSITE" id="PS50293">
    <property type="entry name" value="TPR_REGION"/>
    <property type="match status" value="1"/>
</dbReference>
<sequence>MEQQEPGATLDDGMDSFLEKFQSQPYRGGFHESQWEEEFEKIPLFMKNSPSEIDPLENPDLACLQSIIFDEERSPEDQARTYKDEGNDYFKEKDYKKAVISYTEGLKKKCADPDLNAVLYTNRAAAQYYLGNFRSSLNDVTAARKLKPCHLKAIIRGASCHLELKNYVEAVNWCDEGLQIDATEKKLLDLRAKADKLKRTEQRDVRKAKLKEKKQQDQNEALLQAIKARNIRLVAEAAGEDEDSASEGLSELVLYGLSSENPCGARLGVDDQGRLSWPVLFLYPEYAQSDLVSAFHEDSRFIDHLMVMFGETPSWDLEQKYCPDNLEVYFEDEDRAELYCVPPSSTLLQVLQHPRYFVKALTPTFLVCVGSSGFCRNYLRGKKVHQVK</sequence>